<keyword id="KW-0210">Decarboxylase</keyword>
<keyword id="KW-0456">Lyase</keyword>
<keyword id="KW-0665">Pyrimidine biosynthesis</keyword>
<accession>B0U1D6</accession>
<proteinExistence type="inferred from homology"/>
<reference key="1">
    <citation type="journal article" date="2010" name="J. Bacteriol.">
        <title>Whole genome sequences of two Xylella fastidiosa strains (M12 and M23) causing almond leaf scorch disease in California.</title>
        <authorList>
            <person name="Chen J."/>
            <person name="Xie G."/>
            <person name="Han S."/>
            <person name="Chertkov O."/>
            <person name="Sims D."/>
            <person name="Civerolo E.L."/>
        </authorList>
    </citation>
    <scope>NUCLEOTIDE SEQUENCE [LARGE SCALE GENOMIC DNA]</scope>
    <source>
        <strain>M12</strain>
    </source>
</reference>
<organism>
    <name type="scientific">Xylella fastidiosa (strain M12)</name>
    <dbReference type="NCBI Taxonomy" id="405440"/>
    <lineage>
        <taxon>Bacteria</taxon>
        <taxon>Pseudomonadati</taxon>
        <taxon>Pseudomonadota</taxon>
        <taxon>Gammaproteobacteria</taxon>
        <taxon>Lysobacterales</taxon>
        <taxon>Lysobacteraceae</taxon>
        <taxon>Xylella</taxon>
    </lineage>
</organism>
<dbReference type="EC" id="4.1.1.23" evidence="1"/>
<dbReference type="EMBL" id="CP000941">
    <property type="protein sequence ID" value="ACA11077.1"/>
    <property type="molecule type" value="Genomic_DNA"/>
</dbReference>
<dbReference type="SMR" id="B0U1D6"/>
<dbReference type="KEGG" id="xfm:Xfasm12_0029"/>
<dbReference type="HOGENOM" id="CLU_067069_1_0_6"/>
<dbReference type="UniPathway" id="UPA00070">
    <property type="reaction ID" value="UER00120"/>
</dbReference>
<dbReference type="GO" id="GO:0005829">
    <property type="term" value="C:cytosol"/>
    <property type="evidence" value="ECO:0007669"/>
    <property type="project" value="TreeGrafter"/>
</dbReference>
<dbReference type="GO" id="GO:0004590">
    <property type="term" value="F:orotidine-5'-phosphate decarboxylase activity"/>
    <property type="evidence" value="ECO:0007669"/>
    <property type="project" value="UniProtKB-UniRule"/>
</dbReference>
<dbReference type="GO" id="GO:0006207">
    <property type="term" value="P:'de novo' pyrimidine nucleobase biosynthetic process"/>
    <property type="evidence" value="ECO:0007669"/>
    <property type="project" value="InterPro"/>
</dbReference>
<dbReference type="GO" id="GO:0044205">
    <property type="term" value="P:'de novo' UMP biosynthetic process"/>
    <property type="evidence" value="ECO:0007669"/>
    <property type="project" value="UniProtKB-UniRule"/>
</dbReference>
<dbReference type="CDD" id="cd04725">
    <property type="entry name" value="OMP_decarboxylase_like"/>
    <property type="match status" value="1"/>
</dbReference>
<dbReference type="Gene3D" id="3.20.20.70">
    <property type="entry name" value="Aldolase class I"/>
    <property type="match status" value="1"/>
</dbReference>
<dbReference type="HAMAP" id="MF_01200_B">
    <property type="entry name" value="OMPdecase_type1_B"/>
    <property type="match status" value="1"/>
</dbReference>
<dbReference type="InterPro" id="IPR013785">
    <property type="entry name" value="Aldolase_TIM"/>
</dbReference>
<dbReference type="InterPro" id="IPR014732">
    <property type="entry name" value="OMPdecase"/>
</dbReference>
<dbReference type="InterPro" id="IPR018089">
    <property type="entry name" value="OMPdecase_AS"/>
</dbReference>
<dbReference type="InterPro" id="IPR047596">
    <property type="entry name" value="OMPdecase_bac"/>
</dbReference>
<dbReference type="InterPro" id="IPR001754">
    <property type="entry name" value="OMPdeCOase_dom"/>
</dbReference>
<dbReference type="InterPro" id="IPR011060">
    <property type="entry name" value="RibuloseP-bd_barrel"/>
</dbReference>
<dbReference type="NCBIfam" id="NF001273">
    <property type="entry name" value="PRK00230.1"/>
    <property type="match status" value="1"/>
</dbReference>
<dbReference type="NCBIfam" id="TIGR01740">
    <property type="entry name" value="pyrF"/>
    <property type="match status" value="1"/>
</dbReference>
<dbReference type="PANTHER" id="PTHR32119">
    <property type="entry name" value="OROTIDINE 5'-PHOSPHATE DECARBOXYLASE"/>
    <property type="match status" value="1"/>
</dbReference>
<dbReference type="PANTHER" id="PTHR32119:SF2">
    <property type="entry name" value="OROTIDINE 5'-PHOSPHATE DECARBOXYLASE"/>
    <property type="match status" value="1"/>
</dbReference>
<dbReference type="Pfam" id="PF00215">
    <property type="entry name" value="OMPdecase"/>
    <property type="match status" value="1"/>
</dbReference>
<dbReference type="SMART" id="SM00934">
    <property type="entry name" value="OMPdecase"/>
    <property type="match status" value="1"/>
</dbReference>
<dbReference type="SUPFAM" id="SSF51366">
    <property type="entry name" value="Ribulose-phoshate binding barrel"/>
    <property type="match status" value="1"/>
</dbReference>
<dbReference type="PROSITE" id="PS00156">
    <property type="entry name" value="OMPDECASE"/>
    <property type="match status" value="1"/>
</dbReference>
<evidence type="ECO:0000255" key="1">
    <source>
        <dbReference type="HAMAP-Rule" id="MF_01200"/>
    </source>
</evidence>
<feature type="chain" id="PRO_1000138573" description="Orotidine 5'-phosphate decarboxylase">
    <location>
        <begin position="1"/>
        <end position="244"/>
    </location>
</feature>
<feature type="active site" description="Proton donor" evidence="1">
    <location>
        <position position="72"/>
    </location>
</feature>
<feature type="binding site" evidence="1">
    <location>
        <position position="20"/>
    </location>
    <ligand>
        <name>substrate</name>
    </ligand>
</feature>
<feature type="binding site" evidence="1">
    <location>
        <position position="42"/>
    </location>
    <ligand>
        <name>substrate</name>
    </ligand>
</feature>
<feature type="binding site" evidence="1">
    <location>
        <begin position="70"/>
        <end position="79"/>
    </location>
    <ligand>
        <name>substrate</name>
    </ligand>
</feature>
<feature type="binding site" evidence="1">
    <location>
        <position position="125"/>
    </location>
    <ligand>
        <name>substrate</name>
    </ligand>
</feature>
<feature type="binding site" evidence="1">
    <location>
        <position position="186"/>
    </location>
    <ligand>
        <name>substrate</name>
    </ligand>
</feature>
<feature type="binding site" evidence="1">
    <location>
        <position position="195"/>
    </location>
    <ligand>
        <name>substrate</name>
    </ligand>
</feature>
<feature type="binding site" evidence="1">
    <location>
        <position position="215"/>
    </location>
    <ligand>
        <name>substrate</name>
    </ligand>
</feature>
<feature type="binding site" evidence="1">
    <location>
        <position position="216"/>
    </location>
    <ligand>
        <name>substrate</name>
    </ligand>
</feature>
<sequence>MMNHTPLLLGIRERLIFALDVPSRTQALEWIDQLGDAISFYKIGMELLASGEYFQVLDDLASRGKRVFVDLKFFDIPATVAGVIRRLSQWPISYCTIHGWHAPMMQAATEANTSNMHLLAVTVLTSMTREDLAKMGINREPVDVVVERALAAHMAGMSGVIASGQEAAAIRRAVGSGFSIVCPGIRTNHVPHNDQQRTIGIKAAFANGADAIVVGRPIRMAQDPQAAAEAMQTEIMTALTEPST</sequence>
<name>PYRF_XYLFM</name>
<protein>
    <recommendedName>
        <fullName evidence="1">Orotidine 5'-phosphate decarboxylase</fullName>
        <ecNumber evidence="1">4.1.1.23</ecNumber>
    </recommendedName>
    <alternativeName>
        <fullName evidence="1">OMP decarboxylase</fullName>
        <shortName evidence="1">OMPDCase</shortName>
        <shortName evidence="1">OMPdecase</shortName>
    </alternativeName>
</protein>
<comment type="function">
    <text evidence="1">Catalyzes the decarboxylation of orotidine 5'-monophosphate (OMP) to uridine 5'-monophosphate (UMP).</text>
</comment>
<comment type="catalytic activity">
    <reaction evidence="1">
        <text>orotidine 5'-phosphate + H(+) = UMP + CO2</text>
        <dbReference type="Rhea" id="RHEA:11596"/>
        <dbReference type="ChEBI" id="CHEBI:15378"/>
        <dbReference type="ChEBI" id="CHEBI:16526"/>
        <dbReference type="ChEBI" id="CHEBI:57538"/>
        <dbReference type="ChEBI" id="CHEBI:57865"/>
        <dbReference type="EC" id="4.1.1.23"/>
    </reaction>
</comment>
<comment type="pathway">
    <text evidence="1">Pyrimidine metabolism; UMP biosynthesis via de novo pathway; UMP from orotate: step 2/2.</text>
</comment>
<comment type="subunit">
    <text evidence="1">Homodimer.</text>
</comment>
<comment type="similarity">
    <text evidence="1">Belongs to the OMP decarboxylase family. Type 1 subfamily.</text>
</comment>
<gene>
    <name evidence="1" type="primary">pyrF</name>
    <name type="ordered locus">Xfasm12_0029</name>
</gene>